<evidence type="ECO:0000255" key="1">
    <source>
        <dbReference type="HAMAP-Rule" id="MF_01629"/>
    </source>
</evidence>
<evidence type="ECO:0000256" key="2">
    <source>
        <dbReference type="SAM" id="MobiDB-lite"/>
    </source>
</evidence>
<organism>
    <name type="scientific">Deinococcus deserti (strain DSM 17065 / CIP 109153 / LMG 22923 / VCD115)</name>
    <dbReference type="NCBI Taxonomy" id="546414"/>
    <lineage>
        <taxon>Bacteria</taxon>
        <taxon>Thermotogati</taxon>
        <taxon>Deinococcota</taxon>
        <taxon>Deinococci</taxon>
        <taxon>Deinococcales</taxon>
        <taxon>Deinococcaceae</taxon>
        <taxon>Deinococcus</taxon>
    </lineage>
</organism>
<keyword id="KW-0285">Flavoprotein</keyword>
<keyword id="KW-0288">FMN</keyword>
<keyword id="KW-0560">Oxidoreductase</keyword>
<keyword id="KW-0664">Pyridoxine biosynthesis</keyword>
<keyword id="KW-1185">Reference proteome</keyword>
<sequence>MTDLSTLRLSYTHGELRRADLNADPAQQFQSWLDAALRSGLREPYAMSLATADREGRPSVRTVLLRGIQDGGLTFFTNYESHKGHDLTDNPQAEVLFFWAEHERQVRAYGPVERLSSEDSAAYFHSRPRESQLAAHASDPQSAPVSNRAELETRLTALHERFAADQEVPCPEFWGGYRIQVQEWEFWQGRPNRMHDRFRYRRNDAGWHIDRLMP</sequence>
<gene>
    <name evidence="1" type="primary">pdxH</name>
    <name type="ordered locus">Deide_06601</name>
</gene>
<comment type="function">
    <text evidence="1">Catalyzes the oxidation of either pyridoxine 5'-phosphate (PNP) or pyridoxamine 5'-phosphate (PMP) into pyridoxal 5'-phosphate (PLP).</text>
</comment>
<comment type="catalytic activity">
    <reaction evidence="1">
        <text>pyridoxamine 5'-phosphate + O2 + H2O = pyridoxal 5'-phosphate + H2O2 + NH4(+)</text>
        <dbReference type="Rhea" id="RHEA:15817"/>
        <dbReference type="ChEBI" id="CHEBI:15377"/>
        <dbReference type="ChEBI" id="CHEBI:15379"/>
        <dbReference type="ChEBI" id="CHEBI:16240"/>
        <dbReference type="ChEBI" id="CHEBI:28938"/>
        <dbReference type="ChEBI" id="CHEBI:58451"/>
        <dbReference type="ChEBI" id="CHEBI:597326"/>
        <dbReference type="EC" id="1.4.3.5"/>
    </reaction>
</comment>
<comment type="catalytic activity">
    <reaction evidence="1">
        <text>pyridoxine 5'-phosphate + O2 = pyridoxal 5'-phosphate + H2O2</text>
        <dbReference type="Rhea" id="RHEA:15149"/>
        <dbReference type="ChEBI" id="CHEBI:15379"/>
        <dbReference type="ChEBI" id="CHEBI:16240"/>
        <dbReference type="ChEBI" id="CHEBI:58589"/>
        <dbReference type="ChEBI" id="CHEBI:597326"/>
        <dbReference type="EC" id="1.4.3.5"/>
    </reaction>
</comment>
<comment type="cofactor">
    <cofactor evidence="1">
        <name>FMN</name>
        <dbReference type="ChEBI" id="CHEBI:58210"/>
    </cofactor>
    <text evidence="1">Binds 1 FMN per subunit.</text>
</comment>
<comment type="pathway">
    <text evidence="1">Cofactor metabolism; pyridoxal 5'-phosphate salvage; pyridoxal 5'-phosphate from pyridoxamine 5'-phosphate: step 1/1.</text>
</comment>
<comment type="pathway">
    <text evidence="1">Cofactor metabolism; pyridoxal 5'-phosphate salvage; pyridoxal 5'-phosphate from pyridoxine 5'-phosphate: step 1/1.</text>
</comment>
<comment type="subunit">
    <text evidence="1">Homodimer.</text>
</comment>
<comment type="similarity">
    <text evidence="1">Belongs to the pyridoxamine 5'-phosphate oxidase family.</text>
</comment>
<reference key="1">
    <citation type="journal article" date="2009" name="PLoS Genet.">
        <title>Alliance of proteomics and genomics to unravel the specificities of Sahara bacterium Deinococcus deserti.</title>
        <authorList>
            <person name="de Groot A."/>
            <person name="Dulermo R."/>
            <person name="Ortet P."/>
            <person name="Blanchard L."/>
            <person name="Guerin P."/>
            <person name="Fernandez B."/>
            <person name="Vacherie B."/>
            <person name="Dossat C."/>
            <person name="Jolivet E."/>
            <person name="Siguier P."/>
            <person name="Chandler M."/>
            <person name="Barakat M."/>
            <person name="Dedieu A."/>
            <person name="Barbe V."/>
            <person name="Heulin T."/>
            <person name="Sommer S."/>
            <person name="Achouak W."/>
            <person name="Armengaud J."/>
        </authorList>
    </citation>
    <scope>NUCLEOTIDE SEQUENCE [LARGE SCALE GENOMIC DNA]</scope>
    <source>
        <strain>DSM 17065 / CIP 109153 / LMG 22923 / VCD115</strain>
    </source>
</reference>
<feature type="chain" id="PRO_1000215761" description="Pyridoxine/pyridoxamine 5'-phosphate oxidase">
    <location>
        <begin position="1"/>
        <end position="214"/>
    </location>
</feature>
<feature type="region of interest" description="Disordered" evidence="2">
    <location>
        <begin position="126"/>
        <end position="146"/>
    </location>
</feature>
<feature type="binding site" evidence="1">
    <location>
        <begin position="8"/>
        <end position="11"/>
    </location>
    <ligand>
        <name>substrate</name>
    </ligand>
</feature>
<feature type="binding site" evidence="1">
    <location>
        <begin position="61"/>
        <end position="66"/>
    </location>
    <ligand>
        <name>FMN</name>
        <dbReference type="ChEBI" id="CHEBI:58210"/>
    </ligand>
</feature>
<feature type="binding site" evidence="1">
    <location>
        <position position="66"/>
    </location>
    <ligand>
        <name>substrate</name>
    </ligand>
</feature>
<feature type="binding site" evidence="1">
    <location>
        <begin position="76"/>
        <end position="77"/>
    </location>
    <ligand>
        <name>FMN</name>
        <dbReference type="ChEBI" id="CHEBI:58210"/>
    </ligand>
</feature>
<feature type="binding site" evidence="1">
    <location>
        <position position="83"/>
    </location>
    <ligand>
        <name>FMN</name>
        <dbReference type="ChEBI" id="CHEBI:58210"/>
    </ligand>
</feature>
<feature type="binding site" evidence="1">
    <location>
        <position position="105"/>
    </location>
    <ligand>
        <name>FMN</name>
        <dbReference type="ChEBI" id="CHEBI:58210"/>
    </ligand>
</feature>
<feature type="binding site" evidence="1">
    <location>
        <position position="123"/>
    </location>
    <ligand>
        <name>substrate</name>
    </ligand>
</feature>
<feature type="binding site" evidence="1">
    <location>
        <position position="127"/>
    </location>
    <ligand>
        <name>substrate</name>
    </ligand>
</feature>
<feature type="binding site" evidence="1">
    <location>
        <position position="131"/>
    </location>
    <ligand>
        <name>substrate</name>
    </ligand>
</feature>
<feature type="binding site" evidence="1">
    <location>
        <begin position="141"/>
        <end position="142"/>
    </location>
    <ligand>
        <name>FMN</name>
        <dbReference type="ChEBI" id="CHEBI:58210"/>
    </ligand>
</feature>
<feature type="binding site" evidence="1">
    <location>
        <position position="187"/>
    </location>
    <ligand>
        <name>FMN</name>
        <dbReference type="ChEBI" id="CHEBI:58210"/>
    </ligand>
</feature>
<feature type="binding site" evidence="1">
    <location>
        <begin position="193"/>
        <end position="195"/>
    </location>
    <ligand>
        <name>substrate</name>
    </ligand>
</feature>
<feature type="binding site" evidence="1">
    <location>
        <position position="197"/>
    </location>
    <ligand>
        <name>FMN</name>
        <dbReference type="ChEBI" id="CHEBI:58210"/>
    </ligand>
</feature>
<accession>C1D0Z0</accession>
<proteinExistence type="inferred from homology"/>
<dbReference type="EC" id="1.4.3.5" evidence="1"/>
<dbReference type="EMBL" id="CP001114">
    <property type="protein sequence ID" value="ACO45514.1"/>
    <property type="molecule type" value="Genomic_DNA"/>
</dbReference>
<dbReference type="RefSeq" id="WP_012692637.1">
    <property type="nucleotide sequence ID" value="NC_012526.1"/>
</dbReference>
<dbReference type="SMR" id="C1D0Z0"/>
<dbReference type="STRING" id="546414.Deide_06601"/>
<dbReference type="PaxDb" id="546414-Deide_06601"/>
<dbReference type="KEGG" id="ddr:Deide_06601"/>
<dbReference type="eggNOG" id="COG0259">
    <property type="taxonomic scope" value="Bacteria"/>
</dbReference>
<dbReference type="HOGENOM" id="CLU_032263_2_2_0"/>
<dbReference type="OrthoDB" id="9780392at2"/>
<dbReference type="UniPathway" id="UPA01068">
    <property type="reaction ID" value="UER00304"/>
</dbReference>
<dbReference type="UniPathway" id="UPA01068">
    <property type="reaction ID" value="UER00305"/>
</dbReference>
<dbReference type="Proteomes" id="UP000002208">
    <property type="component" value="Chromosome"/>
</dbReference>
<dbReference type="GO" id="GO:0010181">
    <property type="term" value="F:FMN binding"/>
    <property type="evidence" value="ECO:0007669"/>
    <property type="project" value="UniProtKB-UniRule"/>
</dbReference>
<dbReference type="GO" id="GO:0004733">
    <property type="term" value="F:pyridoxamine phosphate oxidase activity"/>
    <property type="evidence" value="ECO:0007669"/>
    <property type="project" value="UniProtKB-UniRule"/>
</dbReference>
<dbReference type="GO" id="GO:0008615">
    <property type="term" value="P:pyridoxine biosynthetic process"/>
    <property type="evidence" value="ECO:0007669"/>
    <property type="project" value="UniProtKB-KW"/>
</dbReference>
<dbReference type="Gene3D" id="2.30.110.10">
    <property type="entry name" value="Electron Transport, Fmn-binding Protein, Chain A"/>
    <property type="match status" value="1"/>
</dbReference>
<dbReference type="HAMAP" id="MF_01629">
    <property type="entry name" value="PdxH"/>
    <property type="match status" value="1"/>
</dbReference>
<dbReference type="InterPro" id="IPR000659">
    <property type="entry name" value="Pyridox_Oxase"/>
</dbReference>
<dbReference type="InterPro" id="IPR019740">
    <property type="entry name" value="Pyridox_Oxase_CS"/>
</dbReference>
<dbReference type="InterPro" id="IPR011576">
    <property type="entry name" value="Pyridox_Oxase_N"/>
</dbReference>
<dbReference type="InterPro" id="IPR019576">
    <property type="entry name" value="Pyridoxamine_oxidase_dimer_C"/>
</dbReference>
<dbReference type="InterPro" id="IPR012349">
    <property type="entry name" value="Split_barrel_FMN-bd"/>
</dbReference>
<dbReference type="NCBIfam" id="TIGR00558">
    <property type="entry name" value="pdxH"/>
    <property type="match status" value="1"/>
</dbReference>
<dbReference type="NCBIfam" id="NF004231">
    <property type="entry name" value="PRK05679.1"/>
    <property type="match status" value="1"/>
</dbReference>
<dbReference type="PANTHER" id="PTHR10851:SF0">
    <property type="entry name" value="PYRIDOXINE-5'-PHOSPHATE OXIDASE"/>
    <property type="match status" value="1"/>
</dbReference>
<dbReference type="PANTHER" id="PTHR10851">
    <property type="entry name" value="PYRIDOXINE-5-PHOSPHATE OXIDASE"/>
    <property type="match status" value="1"/>
</dbReference>
<dbReference type="Pfam" id="PF10590">
    <property type="entry name" value="PNP_phzG_C"/>
    <property type="match status" value="1"/>
</dbReference>
<dbReference type="Pfam" id="PF01243">
    <property type="entry name" value="PNPOx_N"/>
    <property type="match status" value="1"/>
</dbReference>
<dbReference type="PIRSF" id="PIRSF000190">
    <property type="entry name" value="Pyd_amn-ph_oxd"/>
    <property type="match status" value="1"/>
</dbReference>
<dbReference type="SUPFAM" id="SSF50475">
    <property type="entry name" value="FMN-binding split barrel"/>
    <property type="match status" value="1"/>
</dbReference>
<dbReference type="PROSITE" id="PS01064">
    <property type="entry name" value="PYRIDOX_OXIDASE"/>
    <property type="match status" value="1"/>
</dbReference>
<name>PDXH_DEIDV</name>
<protein>
    <recommendedName>
        <fullName evidence="1">Pyridoxine/pyridoxamine 5'-phosphate oxidase</fullName>
        <ecNumber evidence="1">1.4.3.5</ecNumber>
    </recommendedName>
    <alternativeName>
        <fullName evidence="1">PNP/PMP oxidase</fullName>
        <shortName evidence="1">PNPOx</shortName>
    </alternativeName>
    <alternativeName>
        <fullName evidence="1">Pyridoxal 5'-phosphate synthase</fullName>
    </alternativeName>
</protein>